<dbReference type="EC" id="3.1.1.123" evidence="3"/>
<dbReference type="EMBL" id="OM304291">
    <property type="protein sequence ID" value="UQZ09622.1"/>
    <property type="molecule type" value="mRNA"/>
</dbReference>
<dbReference type="SMR" id="P0DO80"/>
<dbReference type="KEGG" id="ag:UQZ09622"/>
<dbReference type="GO" id="GO:0016787">
    <property type="term" value="F:hydrolase activity"/>
    <property type="evidence" value="ECO:0000314"/>
    <property type="project" value="UniProtKB"/>
</dbReference>
<dbReference type="GO" id="GO:0080030">
    <property type="term" value="F:methyl indole-3-acetate esterase activity"/>
    <property type="evidence" value="ECO:0007669"/>
    <property type="project" value="TreeGrafter"/>
</dbReference>
<dbReference type="GO" id="GO:0080032">
    <property type="term" value="F:methyl jasmonate esterase activity"/>
    <property type="evidence" value="ECO:0007669"/>
    <property type="project" value="TreeGrafter"/>
</dbReference>
<dbReference type="GO" id="GO:0080031">
    <property type="term" value="F:methyl salicylate esterase activity"/>
    <property type="evidence" value="ECO:0007669"/>
    <property type="project" value="TreeGrafter"/>
</dbReference>
<dbReference type="GO" id="GO:0009821">
    <property type="term" value="P:alkaloid biosynthetic process"/>
    <property type="evidence" value="ECO:0000314"/>
    <property type="project" value="UniProtKB"/>
</dbReference>
<dbReference type="GO" id="GO:0009694">
    <property type="term" value="P:jasmonic acid metabolic process"/>
    <property type="evidence" value="ECO:0007669"/>
    <property type="project" value="TreeGrafter"/>
</dbReference>
<dbReference type="GO" id="GO:0009696">
    <property type="term" value="P:salicylic acid metabolic process"/>
    <property type="evidence" value="ECO:0007669"/>
    <property type="project" value="TreeGrafter"/>
</dbReference>
<dbReference type="FunFam" id="3.40.50.1820:FF:000051">
    <property type="entry name" value="(S)-hydroxynitrile lyase"/>
    <property type="match status" value="1"/>
</dbReference>
<dbReference type="Gene3D" id="3.40.50.1820">
    <property type="entry name" value="alpha/beta hydrolase"/>
    <property type="match status" value="1"/>
</dbReference>
<dbReference type="InterPro" id="IPR000073">
    <property type="entry name" value="AB_hydrolase_1"/>
</dbReference>
<dbReference type="InterPro" id="IPR029058">
    <property type="entry name" value="AB_hydrolase_fold"/>
</dbReference>
<dbReference type="InterPro" id="IPR045889">
    <property type="entry name" value="MES/HNL"/>
</dbReference>
<dbReference type="PANTHER" id="PTHR10992:SF1083">
    <property type="entry name" value="METHYLESTERASE 1"/>
    <property type="match status" value="1"/>
</dbReference>
<dbReference type="PANTHER" id="PTHR10992">
    <property type="entry name" value="METHYLESTERASE FAMILY MEMBER"/>
    <property type="match status" value="1"/>
</dbReference>
<dbReference type="Pfam" id="PF12697">
    <property type="entry name" value="Abhydrolase_6"/>
    <property type="match status" value="1"/>
</dbReference>
<dbReference type="SUPFAM" id="SSF53474">
    <property type="entry name" value="alpha/beta-Hydrolases"/>
    <property type="match status" value="1"/>
</dbReference>
<feature type="chain" id="PRO_0000461118" description="Norfluorocurarine synthase 1">
    <location>
        <begin position="1"/>
        <end position="266"/>
    </location>
</feature>
<feature type="domain" description="AB hydrolase-1" evidence="2">
    <location>
        <begin position="11"/>
        <end position="121"/>
    </location>
</feature>
<feature type="active site" evidence="1">
    <location>
        <position position="86"/>
    </location>
</feature>
<feature type="active site" evidence="1">
    <location>
        <position position="216"/>
    </location>
</feature>
<feature type="active site" evidence="1">
    <location>
        <position position="244"/>
    </location>
</feature>
<sequence>MEGVNAKKQKHFVLVHGAGHGAWCWYKLKPLLESSGHKVTAIDLLASGINTKRLDEVDTLRDYSLPLLELMAAIPPDEKVILVGHSFGGFSTAIAMEHYPEKISIAVFIASVMPDAVHPPSYFFNLVFEWSPKDEDPLDTKIEPYGNPDQPRTAIRYGPKYLSSKIYQNCTTEEIELANLLLRPIYLFAEDLSKAKAFSAKGYGSVKRAYIVCSEDKSFPVGFQHWLVENVGVIEAKEIKDADHMAMISKPQRLRQCLQEIADKVV</sequence>
<comment type="function">
    <text evidence="3">Hydrolase involved in the biosynthesis of curare monoterpene indole alkaloids (MIAs), natural products such as strychnine, a neurotoxic compound used as a pesticide to control rodents, and its pharmacologically active derivatives, including brucine, used to regulate blood pressure (PubMed:35794473). Curare alkaloids act as animal glycine receptor antagonists (PubMed:35794473). Catalyzes the conversion of dehydropreakuammicine to norfluorocurarine (PubMed:35794473).</text>
</comment>
<comment type="catalytic activity">
    <reaction evidence="3">
        <text>17-dehydropreakuammicine + H2O = norfluorocurarine + methanol + CO2</text>
        <dbReference type="Rhea" id="RHEA:80899"/>
        <dbReference type="ChEBI" id="CHEBI:15377"/>
        <dbReference type="ChEBI" id="CHEBI:16526"/>
        <dbReference type="ChEBI" id="CHEBI:17790"/>
        <dbReference type="ChEBI" id="CHEBI:230469"/>
        <dbReference type="ChEBI" id="CHEBI:231650"/>
        <dbReference type="EC" id="3.1.1.123"/>
    </reaction>
    <physiologicalReaction direction="left-to-right" evidence="3">
        <dbReference type="Rhea" id="RHEA:80900"/>
    </physiologicalReaction>
</comment>
<comment type="pathway">
    <text evidence="3">Alkaloid biosynthesis.</text>
</comment>
<comment type="subunit">
    <text evidence="1">Homodimer.</text>
</comment>
<comment type="tissue specificity">
    <text evidence="3">Mainly expressed in roots.</text>
</comment>
<comment type="similarity">
    <text evidence="5">Belongs to the AB hydrolase superfamily.</text>
</comment>
<proteinExistence type="evidence at protein level"/>
<protein>
    <recommendedName>
        <fullName evidence="4">Norfluorocurarine synthase 1</fullName>
        <shortName evidence="4">SnvNS1</shortName>
        <ecNumber evidence="3">3.1.1.123</ecNumber>
    </recommendedName>
</protein>
<name>NS1_STRNX</name>
<organism>
    <name type="scientific">Strychnos nux-vomica</name>
    <name type="common">Poison nut</name>
    <name type="synonym">Strychnine tree</name>
    <dbReference type="NCBI Taxonomy" id="28545"/>
    <lineage>
        <taxon>Eukaryota</taxon>
        <taxon>Viridiplantae</taxon>
        <taxon>Streptophyta</taxon>
        <taxon>Embryophyta</taxon>
        <taxon>Tracheophyta</taxon>
        <taxon>Spermatophyta</taxon>
        <taxon>Magnoliopsida</taxon>
        <taxon>eudicotyledons</taxon>
        <taxon>Gunneridae</taxon>
        <taxon>Pentapetalae</taxon>
        <taxon>asterids</taxon>
        <taxon>lamiids</taxon>
        <taxon>Gentianales</taxon>
        <taxon>Loganiaceae</taxon>
        <taxon>Strychnos</taxon>
    </lineage>
</organism>
<reference key="1">
    <citation type="journal article" date="2022" name="Nature">
        <title>Biosynthesis of strychnine.</title>
        <authorList>
            <person name="Hong B."/>
            <person name="Grzech D."/>
            <person name="Caputi L."/>
            <person name="Sonawane P."/>
            <person name="Lopez C.E.R."/>
            <person name="Kamileen M.O."/>
            <person name="Hernandez Lozada N.J."/>
            <person name="Grabe V."/>
            <person name="O'Connor S.E."/>
        </authorList>
    </citation>
    <scope>NUCLEOTIDE SEQUENCE [MRNA]</scope>
    <scope>FUNCTION</scope>
    <scope>CATALYTIC ACTIVITY</scope>
    <scope>PATHWAY</scope>
    <scope>TISSUE SPECIFICITY</scope>
</reference>
<gene>
    <name evidence="4" type="primary">NS1</name>
</gene>
<keyword id="KW-0017">Alkaloid metabolism</keyword>
<keyword id="KW-0378">Hydrolase</keyword>
<keyword id="KW-0719">Serine esterase</keyword>
<evidence type="ECO:0000250" key="1">
    <source>
        <dbReference type="UniProtKB" id="Q9SE93"/>
    </source>
</evidence>
<evidence type="ECO:0000255" key="2"/>
<evidence type="ECO:0000269" key="3">
    <source>
    </source>
</evidence>
<evidence type="ECO:0000303" key="4">
    <source>
    </source>
</evidence>
<evidence type="ECO:0000305" key="5"/>
<accession>P0DO80</accession>